<protein>
    <recommendedName>
        <fullName evidence="1">DNA ligase B</fullName>
        <ecNumber evidence="1">6.5.1.2</ecNumber>
    </recommendedName>
    <alternativeName>
        <fullName evidence="1">Polydeoxyribonucleotide synthase [NAD(+)] B</fullName>
    </alternativeName>
</protein>
<accession>B5EXF2</accession>
<name>LIGB_SALA4</name>
<proteinExistence type="inferred from homology"/>
<sequence length="561" mass="62898">MRLWKSMAWGILLWHSQSGALCPAWPPARAAEEIARLQQQLADWNDIYWKQGVSAVDDSVYDQLSARLVQWQRCVGQDVSSTPVSPPLNGTTMHPVAHTGVRKLADRQAVEQWMRGRSELWVQPKVDGVAVTLVYQNGKLTRAISRGNGLQGEDWTPKIRLIPSIPQTTQGALANAVLQGEIFLQREGHIQQRMGGMNARSKVAGMLMRQDNASALNSLGIFIWAWPDGPANMPERLSQLAKAGFSLTKKYSLVVKDASEVERARQSWLTSALPFVTDGVVIRMAKEPASQYWRPGQGDWLAAWKYPPVAQVAQVSAIQFSVGKSGKITVVASLVPVILDDKRVQRVNIGSVKRWEAWDIAPGDQILVSLAGQGIPRLDEVVWRSRERSKPVPPDSHFNSLTCFYASATCQEQFISRLVWLGSRSALGLDGMGEASWRALHQTHRFEHIFSWLTLTSAQIANTPGFAKGKSEQIWRQFNLARRQSFTRWIMAMDIPLTQAALQASGDRSWEQLLMRTEQHWRQLPATGERRAGRVIDWRNNPQIKTLSRWLAAQHIPGFGS</sequence>
<gene>
    <name evidence="1" type="primary">ligB</name>
    <name type="ordered locus">SeAg_B3956</name>
</gene>
<evidence type="ECO:0000255" key="1">
    <source>
        <dbReference type="HAMAP-Rule" id="MF_01587"/>
    </source>
</evidence>
<keyword id="KW-0227">DNA damage</keyword>
<keyword id="KW-0234">DNA repair</keyword>
<keyword id="KW-0235">DNA replication</keyword>
<keyword id="KW-0436">Ligase</keyword>
<keyword id="KW-0520">NAD</keyword>
<reference key="1">
    <citation type="journal article" date="2011" name="J. Bacteriol.">
        <title>Comparative genomics of 28 Salmonella enterica isolates: evidence for CRISPR-mediated adaptive sublineage evolution.</title>
        <authorList>
            <person name="Fricke W.F."/>
            <person name="Mammel M.K."/>
            <person name="McDermott P.F."/>
            <person name="Tartera C."/>
            <person name="White D.G."/>
            <person name="Leclerc J.E."/>
            <person name="Ravel J."/>
            <person name="Cebula T.A."/>
        </authorList>
    </citation>
    <scope>NUCLEOTIDE SEQUENCE [LARGE SCALE GENOMIC DNA]</scope>
    <source>
        <strain>SL483</strain>
    </source>
</reference>
<comment type="function">
    <text evidence="1">Catalyzes the formation of phosphodiester linkages between 5'-phosphoryl and 3'-hydroxyl groups in double-stranded DNA using NAD as a coenzyme and as the energy source for the reaction.</text>
</comment>
<comment type="catalytic activity">
    <reaction evidence="1">
        <text>NAD(+) + (deoxyribonucleotide)n-3'-hydroxyl + 5'-phospho-(deoxyribonucleotide)m = (deoxyribonucleotide)n+m + AMP + beta-nicotinamide D-nucleotide.</text>
        <dbReference type="EC" id="6.5.1.2"/>
    </reaction>
</comment>
<comment type="similarity">
    <text evidence="1">Belongs to the NAD-dependent DNA ligase family. LigB subfamily.</text>
</comment>
<feature type="chain" id="PRO_1000147726" description="DNA ligase B">
    <location>
        <begin position="1"/>
        <end position="561"/>
    </location>
</feature>
<feature type="active site" description="N6-AMP-lysine intermediate" evidence="1">
    <location>
        <position position="125"/>
    </location>
</feature>
<organism>
    <name type="scientific">Salmonella agona (strain SL483)</name>
    <dbReference type="NCBI Taxonomy" id="454166"/>
    <lineage>
        <taxon>Bacteria</taxon>
        <taxon>Pseudomonadati</taxon>
        <taxon>Pseudomonadota</taxon>
        <taxon>Gammaproteobacteria</taxon>
        <taxon>Enterobacterales</taxon>
        <taxon>Enterobacteriaceae</taxon>
        <taxon>Salmonella</taxon>
    </lineage>
</organism>
<dbReference type="EC" id="6.5.1.2" evidence="1"/>
<dbReference type="EMBL" id="CP001138">
    <property type="protein sequence ID" value="ACH48897.1"/>
    <property type="molecule type" value="Genomic_DNA"/>
</dbReference>
<dbReference type="RefSeq" id="WP_001241833.1">
    <property type="nucleotide sequence ID" value="NC_011149.1"/>
</dbReference>
<dbReference type="SMR" id="B5EXF2"/>
<dbReference type="KEGG" id="sea:SeAg_B3956"/>
<dbReference type="HOGENOM" id="CLU_489786_0_0_6"/>
<dbReference type="Proteomes" id="UP000008819">
    <property type="component" value="Chromosome"/>
</dbReference>
<dbReference type="GO" id="GO:0003911">
    <property type="term" value="F:DNA ligase (NAD+) activity"/>
    <property type="evidence" value="ECO:0007669"/>
    <property type="project" value="UniProtKB-UniRule"/>
</dbReference>
<dbReference type="GO" id="GO:0006281">
    <property type="term" value="P:DNA repair"/>
    <property type="evidence" value="ECO:0007669"/>
    <property type="project" value="UniProtKB-KW"/>
</dbReference>
<dbReference type="GO" id="GO:0006260">
    <property type="term" value="P:DNA replication"/>
    <property type="evidence" value="ECO:0007669"/>
    <property type="project" value="UniProtKB-KW"/>
</dbReference>
<dbReference type="FunFam" id="1.10.287.610:FF:000003">
    <property type="entry name" value="DNA ligase B"/>
    <property type="match status" value="1"/>
</dbReference>
<dbReference type="FunFam" id="2.40.50.140:FF:000139">
    <property type="entry name" value="DNA ligase B"/>
    <property type="match status" value="1"/>
</dbReference>
<dbReference type="FunFam" id="3.30.470.30:FF:000007">
    <property type="entry name" value="DNA ligase B"/>
    <property type="match status" value="1"/>
</dbReference>
<dbReference type="Gene3D" id="1.10.150.20">
    <property type="entry name" value="5' to 3' exonuclease, C-terminal subdomain"/>
    <property type="match status" value="1"/>
</dbReference>
<dbReference type="Gene3D" id="3.30.470.30">
    <property type="entry name" value="DNA ligase/mRNA capping enzyme"/>
    <property type="match status" value="1"/>
</dbReference>
<dbReference type="Gene3D" id="1.10.287.610">
    <property type="entry name" value="Helix hairpin bin"/>
    <property type="match status" value="1"/>
</dbReference>
<dbReference type="Gene3D" id="2.40.50.140">
    <property type="entry name" value="Nucleic acid-binding proteins"/>
    <property type="match status" value="1"/>
</dbReference>
<dbReference type="HAMAP" id="MF_01587">
    <property type="entry name" value="DNA_ligase_B"/>
    <property type="match status" value="1"/>
</dbReference>
<dbReference type="InterPro" id="IPR018239">
    <property type="entry name" value="DNA_ligase_AS"/>
</dbReference>
<dbReference type="InterPro" id="IPR020923">
    <property type="entry name" value="DNA_ligase_B"/>
</dbReference>
<dbReference type="InterPro" id="IPR033136">
    <property type="entry name" value="DNA_ligase_CS"/>
</dbReference>
<dbReference type="InterPro" id="IPR013839">
    <property type="entry name" value="DNAligase_adenylation"/>
</dbReference>
<dbReference type="InterPro" id="IPR013840">
    <property type="entry name" value="DNAligase_N"/>
</dbReference>
<dbReference type="InterPro" id="IPR012340">
    <property type="entry name" value="NA-bd_OB-fold"/>
</dbReference>
<dbReference type="InterPro" id="IPR050326">
    <property type="entry name" value="NAD_dep_DNA_ligaseB"/>
</dbReference>
<dbReference type="InterPro" id="IPR004150">
    <property type="entry name" value="NAD_DNA_ligase_OB"/>
</dbReference>
<dbReference type="InterPro" id="IPR010994">
    <property type="entry name" value="RuvA_2-like"/>
</dbReference>
<dbReference type="NCBIfam" id="NF005987">
    <property type="entry name" value="PRK08097.1"/>
    <property type="match status" value="1"/>
</dbReference>
<dbReference type="PANTHER" id="PTHR47810">
    <property type="entry name" value="DNA LIGASE"/>
    <property type="match status" value="1"/>
</dbReference>
<dbReference type="PANTHER" id="PTHR47810:SF1">
    <property type="entry name" value="DNA LIGASE B"/>
    <property type="match status" value="1"/>
</dbReference>
<dbReference type="Pfam" id="PF01653">
    <property type="entry name" value="DNA_ligase_aden"/>
    <property type="match status" value="1"/>
</dbReference>
<dbReference type="Pfam" id="PF03120">
    <property type="entry name" value="DNA_ligase_OB"/>
    <property type="match status" value="1"/>
</dbReference>
<dbReference type="SMART" id="SM00532">
    <property type="entry name" value="LIGANc"/>
    <property type="match status" value="1"/>
</dbReference>
<dbReference type="SUPFAM" id="SSF56091">
    <property type="entry name" value="DNA ligase/mRNA capping enzyme, catalytic domain"/>
    <property type="match status" value="1"/>
</dbReference>
<dbReference type="SUPFAM" id="SSF50249">
    <property type="entry name" value="Nucleic acid-binding proteins"/>
    <property type="match status" value="1"/>
</dbReference>
<dbReference type="SUPFAM" id="SSF47781">
    <property type="entry name" value="RuvA domain 2-like"/>
    <property type="match status" value="1"/>
</dbReference>
<dbReference type="PROSITE" id="PS01055">
    <property type="entry name" value="DNA_LIGASE_N1"/>
    <property type="match status" value="1"/>
</dbReference>
<dbReference type="PROSITE" id="PS01056">
    <property type="entry name" value="DNA_LIGASE_N2"/>
    <property type="match status" value="1"/>
</dbReference>